<reference key="1">
    <citation type="journal article" date="2003" name="Nature">
        <title>The genome sequence of Bacillus anthracis Ames and comparison to closely related bacteria.</title>
        <authorList>
            <person name="Read T.D."/>
            <person name="Peterson S.N."/>
            <person name="Tourasse N.J."/>
            <person name="Baillie L.W."/>
            <person name="Paulsen I.T."/>
            <person name="Nelson K.E."/>
            <person name="Tettelin H."/>
            <person name="Fouts D.E."/>
            <person name="Eisen J.A."/>
            <person name="Gill S.R."/>
            <person name="Holtzapple E.K."/>
            <person name="Okstad O.A."/>
            <person name="Helgason E."/>
            <person name="Rilstone J."/>
            <person name="Wu M."/>
            <person name="Kolonay J.F."/>
            <person name="Beanan M.J."/>
            <person name="Dodson R.J."/>
            <person name="Brinkac L.M."/>
            <person name="Gwinn M.L."/>
            <person name="DeBoy R.T."/>
            <person name="Madpu R."/>
            <person name="Daugherty S.C."/>
            <person name="Durkin A.S."/>
            <person name="Haft D.H."/>
            <person name="Nelson W.C."/>
            <person name="Peterson J.D."/>
            <person name="Pop M."/>
            <person name="Khouri H.M."/>
            <person name="Radune D."/>
            <person name="Benton J.L."/>
            <person name="Mahamoud Y."/>
            <person name="Jiang L."/>
            <person name="Hance I.R."/>
            <person name="Weidman J.F."/>
            <person name="Berry K.J."/>
            <person name="Plaut R.D."/>
            <person name="Wolf A.M."/>
            <person name="Watkins K.L."/>
            <person name="Nierman W.C."/>
            <person name="Hazen A."/>
            <person name="Cline R.T."/>
            <person name="Redmond C."/>
            <person name="Thwaite J.E."/>
            <person name="White O."/>
            <person name="Salzberg S.L."/>
            <person name="Thomason B."/>
            <person name="Friedlander A.M."/>
            <person name="Koehler T.M."/>
            <person name="Hanna P.C."/>
            <person name="Kolstoe A.-B."/>
            <person name="Fraser C.M."/>
        </authorList>
    </citation>
    <scope>NUCLEOTIDE SEQUENCE [LARGE SCALE GENOMIC DNA]</scope>
    <source>
        <strain>Ames / isolate Porton</strain>
    </source>
</reference>
<reference key="2">
    <citation type="journal article" date="2009" name="J. Bacteriol.">
        <title>The complete genome sequence of Bacillus anthracis Ames 'Ancestor'.</title>
        <authorList>
            <person name="Ravel J."/>
            <person name="Jiang L."/>
            <person name="Stanley S.T."/>
            <person name="Wilson M.R."/>
            <person name="Decker R.S."/>
            <person name="Read T.D."/>
            <person name="Worsham P."/>
            <person name="Keim P.S."/>
            <person name="Salzberg S.L."/>
            <person name="Fraser-Liggett C.M."/>
            <person name="Rasko D.A."/>
        </authorList>
    </citation>
    <scope>NUCLEOTIDE SEQUENCE [LARGE SCALE GENOMIC DNA]</scope>
    <source>
        <strain>Ames ancestor</strain>
    </source>
</reference>
<reference key="3">
    <citation type="submission" date="2004-01" db="EMBL/GenBank/DDBJ databases">
        <title>Complete genome sequence of Bacillus anthracis Sterne.</title>
        <authorList>
            <person name="Brettin T.S."/>
            <person name="Bruce D."/>
            <person name="Challacombe J.F."/>
            <person name="Gilna P."/>
            <person name="Han C."/>
            <person name="Hill K."/>
            <person name="Hitchcock P."/>
            <person name="Jackson P."/>
            <person name="Keim P."/>
            <person name="Longmire J."/>
            <person name="Lucas S."/>
            <person name="Okinaka R."/>
            <person name="Richardson P."/>
            <person name="Rubin E."/>
            <person name="Tice H."/>
        </authorList>
    </citation>
    <scope>NUCLEOTIDE SEQUENCE [LARGE SCALE GENOMIC DNA]</scope>
    <source>
        <strain>Sterne</strain>
    </source>
</reference>
<accession>Q81SV8</accession>
<accession>Q6I137</accession>
<accession>Q6KUZ1</accession>
<comment type="function">
    <text evidence="1">Major role in the synthesis of nucleoside triphosphates other than ATP. The ATP gamma phosphate is transferred to the NDP beta phosphate via a ping-pong mechanism, using a phosphorylated active-site intermediate.</text>
</comment>
<comment type="catalytic activity">
    <reaction evidence="1">
        <text>a 2'-deoxyribonucleoside 5'-diphosphate + ATP = a 2'-deoxyribonucleoside 5'-triphosphate + ADP</text>
        <dbReference type="Rhea" id="RHEA:44640"/>
        <dbReference type="ChEBI" id="CHEBI:30616"/>
        <dbReference type="ChEBI" id="CHEBI:61560"/>
        <dbReference type="ChEBI" id="CHEBI:73316"/>
        <dbReference type="ChEBI" id="CHEBI:456216"/>
        <dbReference type="EC" id="2.7.4.6"/>
    </reaction>
</comment>
<comment type="catalytic activity">
    <reaction evidence="1">
        <text>a ribonucleoside 5'-diphosphate + ATP = a ribonucleoside 5'-triphosphate + ADP</text>
        <dbReference type="Rhea" id="RHEA:18113"/>
        <dbReference type="ChEBI" id="CHEBI:30616"/>
        <dbReference type="ChEBI" id="CHEBI:57930"/>
        <dbReference type="ChEBI" id="CHEBI:61557"/>
        <dbReference type="ChEBI" id="CHEBI:456216"/>
        <dbReference type="EC" id="2.7.4.6"/>
    </reaction>
</comment>
<comment type="cofactor">
    <cofactor evidence="1">
        <name>Mg(2+)</name>
        <dbReference type="ChEBI" id="CHEBI:18420"/>
    </cofactor>
</comment>
<comment type="subunit">
    <text evidence="1">Homotetramer.</text>
</comment>
<comment type="subcellular location">
    <subcellularLocation>
        <location evidence="1">Cytoplasm</location>
    </subcellularLocation>
</comment>
<comment type="similarity">
    <text evidence="1">Belongs to the NDK family.</text>
</comment>
<keyword id="KW-0002">3D-structure</keyword>
<keyword id="KW-0067">ATP-binding</keyword>
<keyword id="KW-0963">Cytoplasm</keyword>
<keyword id="KW-0418">Kinase</keyword>
<keyword id="KW-0460">Magnesium</keyword>
<keyword id="KW-0479">Metal-binding</keyword>
<keyword id="KW-0546">Nucleotide metabolism</keyword>
<keyword id="KW-0547">Nucleotide-binding</keyword>
<keyword id="KW-0597">Phosphoprotein</keyword>
<keyword id="KW-1185">Reference proteome</keyword>
<keyword id="KW-0808">Transferase</keyword>
<gene>
    <name evidence="1" type="primary">ndk</name>
    <name type="ordered locus">BA_1536</name>
    <name type="ordered locus">GBAA_1536</name>
    <name type="ordered locus">BAS1425</name>
</gene>
<name>NDK_BACAN</name>
<dbReference type="EC" id="2.7.4.6" evidence="1"/>
<dbReference type="EMBL" id="AE016879">
    <property type="protein sequence ID" value="AAP25473.1"/>
    <property type="molecule type" value="Genomic_DNA"/>
</dbReference>
<dbReference type="EMBL" id="AE017334">
    <property type="protein sequence ID" value="AAT30634.1"/>
    <property type="molecule type" value="Genomic_DNA"/>
</dbReference>
<dbReference type="EMBL" id="AE017225">
    <property type="protein sequence ID" value="AAT53745.1"/>
    <property type="molecule type" value="Genomic_DNA"/>
</dbReference>
<dbReference type="RefSeq" id="NP_843987.1">
    <property type="nucleotide sequence ID" value="NC_003997.3"/>
</dbReference>
<dbReference type="RefSeq" id="WP_000415887.1">
    <property type="nucleotide sequence ID" value="NZ_WXXJ01000001.1"/>
</dbReference>
<dbReference type="RefSeq" id="YP_027694.1">
    <property type="nucleotide sequence ID" value="NC_005945.1"/>
</dbReference>
<dbReference type="PDB" id="2VU5">
    <property type="method" value="X-ray"/>
    <property type="resolution" value="2.00 A"/>
    <property type="chains" value="A=1-148"/>
</dbReference>
<dbReference type="PDBsum" id="2VU5"/>
<dbReference type="SMR" id="Q81SV8"/>
<dbReference type="STRING" id="261594.GBAA_1536"/>
<dbReference type="DNASU" id="1083673"/>
<dbReference type="GeneID" id="75084826"/>
<dbReference type="KEGG" id="ban:BA_1536"/>
<dbReference type="KEGG" id="bar:GBAA_1536"/>
<dbReference type="KEGG" id="bat:BAS1425"/>
<dbReference type="PATRIC" id="fig|198094.11.peg.1508"/>
<dbReference type="eggNOG" id="COG0105">
    <property type="taxonomic scope" value="Bacteria"/>
</dbReference>
<dbReference type="HOGENOM" id="CLU_060216_6_3_9"/>
<dbReference type="OMA" id="QHYGEHK"/>
<dbReference type="OrthoDB" id="9801161at2"/>
<dbReference type="BRENDA" id="2.7.4.6">
    <property type="organism ID" value="634"/>
</dbReference>
<dbReference type="EvolutionaryTrace" id="Q81SV8"/>
<dbReference type="Proteomes" id="UP000000427">
    <property type="component" value="Chromosome"/>
</dbReference>
<dbReference type="Proteomes" id="UP000000594">
    <property type="component" value="Chromosome"/>
</dbReference>
<dbReference type="GO" id="GO:0005737">
    <property type="term" value="C:cytoplasm"/>
    <property type="evidence" value="ECO:0007669"/>
    <property type="project" value="UniProtKB-SubCell"/>
</dbReference>
<dbReference type="GO" id="GO:0005524">
    <property type="term" value="F:ATP binding"/>
    <property type="evidence" value="ECO:0007669"/>
    <property type="project" value="UniProtKB-UniRule"/>
</dbReference>
<dbReference type="GO" id="GO:0046872">
    <property type="term" value="F:metal ion binding"/>
    <property type="evidence" value="ECO:0007669"/>
    <property type="project" value="UniProtKB-KW"/>
</dbReference>
<dbReference type="GO" id="GO:0004550">
    <property type="term" value="F:nucleoside diphosphate kinase activity"/>
    <property type="evidence" value="ECO:0007669"/>
    <property type="project" value="UniProtKB-UniRule"/>
</dbReference>
<dbReference type="GO" id="GO:0006241">
    <property type="term" value="P:CTP biosynthetic process"/>
    <property type="evidence" value="ECO:0007669"/>
    <property type="project" value="UniProtKB-UniRule"/>
</dbReference>
<dbReference type="GO" id="GO:0006183">
    <property type="term" value="P:GTP biosynthetic process"/>
    <property type="evidence" value="ECO:0007669"/>
    <property type="project" value="UniProtKB-UniRule"/>
</dbReference>
<dbReference type="GO" id="GO:0006228">
    <property type="term" value="P:UTP biosynthetic process"/>
    <property type="evidence" value="ECO:0007669"/>
    <property type="project" value="UniProtKB-UniRule"/>
</dbReference>
<dbReference type="CDD" id="cd04413">
    <property type="entry name" value="NDPk_I"/>
    <property type="match status" value="1"/>
</dbReference>
<dbReference type="FunFam" id="3.30.70.141:FF:000002">
    <property type="entry name" value="Nucleoside diphosphate kinase"/>
    <property type="match status" value="1"/>
</dbReference>
<dbReference type="Gene3D" id="3.30.70.141">
    <property type="entry name" value="Nucleoside diphosphate kinase-like domain"/>
    <property type="match status" value="1"/>
</dbReference>
<dbReference type="HAMAP" id="MF_00451">
    <property type="entry name" value="NDP_kinase"/>
    <property type="match status" value="1"/>
</dbReference>
<dbReference type="InterPro" id="IPR034907">
    <property type="entry name" value="NDK-like_dom"/>
</dbReference>
<dbReference type="InterPro" id="IPR036850">
    <property type="entry name" value="NDK-like_dom_sf"/>
</dbReference>
<dbReference type="InterPro" id="IPR001564">
    <property type="entry name" value="Nucleoside_diP_kinase"/>
</dbReference>
<dbReference type="InterPro" id="IPR023005">
    <property type="entry name" value="Nucleoside_diP_kinase_AS"/>
</dbReference>
<dbReference type="NCBIfam" id="NF001908">
    <property type="entry name" value="PRK00668.1"/>
    <property type="match status" value="1"/>
</dbReference>
<dbReference type="PANTHER" id="PTHR11349">
    <property type="entry name" value="NUCLEOSIDE DIPHOSPHATE KINASE"/>
    <property type="match status" value="1"/>
</dbReference>
<dbReference type="Pfam" id="PF00334">
    <property type="entry name" value="NDK"/>
    <property type="match status" value="1"/>
</dbReference>
<dbReference type="PRINTS" id="PR01243">
    <property type="entry name" value="NUCDPKINASE"/>
</dbReference>
<dbReference type="SMART" id="SM00562">
    <property type="entry name" value="NDK"/>
    <property type="match status" value="1"/>
</dbReference>
<dbReference type="SUPFAM" id="SSF54919">
    <property type="entry name" value="Nucleoside diphosphate kinase, NDK"/>
    <property type="match status" value="1"/>
</dbReference>
<dbReference type="PROSITE" id="PS00469">
    <property type="entry name" value="NDPK"/>
    <property type="match status" value="1"/>
</dbReference>
<dbReference type="PROSITE" id="PS51374">
    <property type="entry name" value="NDPK_LIKE"/>
    <property type="match status" value="1"/>
</dbReference>
<proteinExistence type="evidence at protein level"/>
<organism>
    <name type="scientific">Bacillus anthracis</name>
    <dbReference type="NCBI Taxonomy" id="1392"/>
    <lineage>
        <taxon>Bacteria</taxon>
        <taxon>Bacillati</taxon>
        <taxon>Bacillota</taxon>
        <taxon>Bacilli</taxon>
        <taxon>Bacillales</taxon>
        <taxon>Bacillaceae</taxon>
        <taxon>Bacillus</taxon>
        <taxon>Bacillus cereus group</taxon>
    </lineage>
</organism>
<evidence type="ECO:0000255" key="1">
    <source>
        <dbReference type="HAMAP-Rule" id="MF_00451"/>
    </source>
</evidence>
<evidence type="ECO:0007829" key="2">
    <source>
        <dbReference type="PDB" id="2VU5"/>
    </source>
</evidence>
<protein>
    <recommendedName>
        <fullName evidence="1">Nucleoside diphosphate kinase</fullName>
        <shortName evidence="1">NDK</shortName>
        <shortName evidence="1">NDP kinase</shortName>
        <ecNumber evidence="1">2.7.4.6</ecNumber>
    </recommendedName>
    <alternativeName>
        <fullName evidence="1">Nucleoside-2-P kinase</fullName>
    </alternativeName>
</protein>
<sequence length="148" mass="16601">MEKTFLMVKPDGVQRAFIGEIVARFEKKGFQLVGAKLMQVTPEIAGQHYAEHTEKPFFGELVDFITSGPVFAMVWQGEGVVDTARNMMGKTRPHEAAPGTIRGDFGVTVAKNIIHGSDSLESAEREIGIFFKEEELVDYSKLMNEWIY</sequence>
<feature type="chain" id="PRO_0000136938" description="Nucleoside diphosphate kinase">
    <location>
        <begin position="1"/>
        <end position="148"/>
    </location>
</feature>
<feature type="active site" description="Pros-phosphohistidine intermediate" evidence="1">
    <location>
        <position position="115"/>
    </location>
</feature>
<feature type="binding site" evidence="1">
    <location>
        <position position="9"/>
    </location>
    <ligand>
        <name>ATP</name>
        <dbReference type="ChEBI" id="CHEBI:30616"/>
    </ligand>
</feature>
<feature type="binding site" evidence="1">
    <location>
        <position position="57"/>
    </location>
    <ligand>
        <name>ATP</name>
        <dbReference type="ChEBI" id="CHEBI:30616"/>
    </ligand>
</feature>
<feature type="binding site" evidence="1">
    <location>
        <position position="85"/>
    </location>
    <ligand>
        <name>ATP</name>
        <dbReference type="ChEBI" id="CHEBI:30616"/>
    </ligand>
</feature>
<feature type="binding site" evidence="1">
    <location>
        <position position="91"/>
    </location>
    <ligand>
        <name>ATP</name>
        <dbReference type="ChEBI" id="CHEBI:30616"/>
    </ligand>
</feature>
<feature type="binding site" evidence="1">
    <location>
        <position position="102"/>
    </location>
    <ligand>
        <name>ATP</name>
        <dbReference type="ChEBI" id="CHEBI:30616"/>
    </ligand>
</feature>
<feature type="binding site" evidence="1">
    <location>
        <position position="112"/>
    </location>
    <ligand>
        <name>ATP</name>
        <dbReference type="ChEBI" id="CHEBI:30616"/>
    </ligand>
</feature>
<feature type="modified residue" description="Phosphothreonine" evidence="1">
    <location>
        <position position="91"/>
    </location>
</feature>
<feature type="modified residue" description="Phosphoserine" evidence="1">
    <location>
        <position position="122"/>
    </location>
</feature>
<feature type="strand" evidence="2">
    <location>
        <begin position="3"/>
        <end position="8"/>
    </location>
</feature>
<feature type="helix" evidence="2">
    <location>
        <begin position="10"/>
        <end position="14"/>
    </location>
</feature>
<feature type="helix" evidence="2">
    <location>
        <begin position="18"/>
        <end position="28"/>
    </location>
</feature>
<feature type="strand" evidence="2">
    <location>
        <begin position="31"/>
        <end position="38"/>
    </location>
</feature>
<feature type="helix" evidence="2">
    <location>
        <begin position="42"/>
        <end position="47"/>
    </location>
</feature>
<feature type="helix" evidence="2">
    <location>
        <begin position="49"/>
        <end position="51"/>
    </location>
</feature>
<feature type="turn" evidence="2">
    <location>
        <begin position="52"/>
        <end position="54"/>
    </location>
</feature>
<feature type="helix" evidence="2">
    <location>
        <begin position="57"/>
        <end position="64"/>
    </location>
</feature>
<feature type="turn" evidence="2">
    <location>
        <begin position="65"/>
        <end position="67"/>
    </location>
</feature>
<feature type="strand" evidence="2">
    <location>
        <begin position="70"/>
        <end position="77"/>
    </location>
</feature>
<feature type="helix" evidence="2">
    <location>
        <begin position="80"/>
        <end position="88"/>
    </location>
</feature>
<feature type="turn" evidence="2">
    <location>
        <begin position="93"/>
        <end position="95"/>
    </location>
</feature>
<feature type="helix" evidence="2">
    <location>
        <begin position="101"/>
        <end position="105"/>
    </location>
</feature>
<feature type="strand" evidence="2">
    <location>
        <begin position="113"/>
        <end position="116"/>
    </location>
</feature>
<feature type="helix" evidence="2">
    <location>
        <begin position="120"/>
        <end position="130"/>
    </location>
</feature>
<feature type="helix" evidence="2">
    <location>
        <begin position="133"/>
        <end position="135"/>
    </location>
</feature>
<feature type="helix" evidence="2">
    <location>
        <begin position="142"/>
        <end position="146"/>
    </location>
</feature>